<accession>Q9LK70</accession>
<accession>F4J2Q2</accession>
<reference key="1">
    <citation type="journal article" date="2000" name="DNA Res.">
        <title>Structural analysis of Arabidopsis thaliana chromosome 3. II. Sequence features of the 4,251,695 bp regions covered by 90 P1, TAC and BAC clones.</title>
        <authorList>
            <person name="Kaneko T."/>
            <person name="Katoh T."/>
            <person name="Sato S."/>
            <person name="Nakamura Y."/>
            <person name="Asamizu E."/>
            <person name="Tabata S."/>
        </authorList>
    </citation>
    <scope>NUCLEOTIDE SEQUENCE [LARGE SCALE GENOMIC DNA]</scope>
    <source>
        <strain>cv. Columbia</strain>
    </source>
</reference>
<reference key="2">
    <citation type="journal article" date="2017" name="Plant J.">
        <title>Araport11: a complete reannotation of the Arabidopsis thaliana reference genome.</title>
        <authorList>
            <person name="Cheng C.Y."/>
            <person name="Krishnakumar V."/>
            <person name="Chan A.P."/>
            <person name="Thibaud-Nissen F."/>
            <person name="Schobel S."/>
            <person name="Town C.D."/>
        </authorList>
    </citation>
    <scope>GENOME REANNOTATION</scope>
    <source>
        <strain>cv. Columbia</strain>
    </source>
</reference>
<reference key="3">
    <citation type="journal article" date="2001" name="Plant Physiol.">
        <title>Chloroplast and mitochondrial proteases in Arabidopsis. A proposed nomenclature.</title>
        <authorList>
            <person name="Adam Z."/>
            <person name="Adamska I."/>
            <person name="Nakabayashi K."/>
            <person name="Ostersetzer O."/>
            <person name="Haussuhl K."/>
            <person name="Manuell A."/>
            <person name="Zheng B."/>
            <person name="Vallon O."/>
            <person name="Rodermel S.R."/>
            <person name="Shinozaki K."/>
            <person name="Clarke A.K."/>
        </authorList>
    </citation>
    <scope>GENE FAMILY</scope>
    <scope>NOMENCLATURE</scope>
</reference>
<proteinExistence type="inferred from homology"/>
<protein>
    <recommendedName>
        <fullName>Putative protease Do-like 12, mitochondrial</fullName>
        <ecNumber>3.4.21.-</ecNumber>
    </recommendedName>
</protein>
<sequence length="499" mass="56188">MLFRSCVGMVSRYSRALLPTITISSRIATIVLPFALTRGRKIHTMSKDEEWWKKIRKSPPVDELMLESVVEVFTDSTKYSKVKPWQTLNQESYGGSGFAIAGKKILTNAHVVEGMNDHIFVHVKRHGSQVKYKAKVQKIAHECDLAILEIDSDEFWKGMNPLEFGDIPPLNEIVYVVGYPKAGETICVTKGVVTGVKTGNYLRSSTKLLTIHIDATTYGGNSGGPVITGDKVLGVLFQILGDKKSTGVVIPTPIIRHFITGAEESSHNAVFGSLVLSCQSMKNAQIRNHFKMSPETTGILINKINSSSGAHKILRKDDIILAIDGVPVLSEMRRISFNHFISMKKPDENILVKVLRKGKEHEYNISLKPVKPHIQVQQYYNLPSYYIFGGFVFVPLTKSYIDDKYYKITDEQHVIISQVMPDDINKGYSNFKDLQVEKVNGVKVKNLKHLRELIEGCFSKDLRLDLENDKVMVLNYESAKKATFEILERHNIKSAWASE</sequence>
<comment type="function">
    <text>Putative serine protease.</text>
</comment>
<comment type="subcellular location">
    <subcellularLocation>
        <location evidence="2">Mitochondrion matrix</location>
    </subcellularLocation>
</comment>
<comment type="similarity">
    <text evidence="2">Belongs to the peptidase S1C family.</text>
</comment>
<keyword id="KW-0378">Hydrolase</keyword>
<keyword id="KW-0496">Mitochondrion</keyword>
<keyword id="KW-0645">Protease</keyword>
<keyword id="KW-1185">Reference proteome</keyword>
<keyword id="KW-0720">Serine protease</keyword>
<keyword id="KW-0809">Transit peptide</keyword>
<dbReference type="EC" id="3.4.21.-"/>
<dbReference type="EMBL" id="AP000373">
    <property type="protein sequence ID" value="BAB01154.1"/>
    <property type="molecule type" value="Genomic_DNA"/>
</dbReference>
<dbReference type="EMBL" id="CP002686">
    <property type="protein sequence ID" value="AEE75834.2"/>
    <property type="molecule type" value="Genomic_DNA"/>
</dbReference>
<dbReference type="RefSeq" id="NP_566552.2">
    <property type="nucleotide sequence ID" value="NM_112527.2"/>
</dbReference>
<dbReference type="SMR" id="Q9LK70"/>
<dbReference type="STRING" id="3702.Q9LK70"/>
<dbReference type="MEROPS" id="S01.A03"/>
<dbReference type="PaxDb" id="3702-AT3G16550.1"/>
<dbReference type="EnsemblPlants" id="AT3G16550.1">
    <property type="protein sequence ID" value="AT3G16550.1"/>
    <property type="gene ID" value="AT3G16550"/>
</dbReference>
<dbReference type="GeneID" id="820903"/>
<dbReference type="Gramene" id="AT3G16550.1">
    <property type="protein sequence ID" value="AT3G16550.1"/>
    <property type="gene ID" value="AT3G16550"/>
</dbReference>
<dbReference type="KEGG" id="ath:AT3G16550"/>
<dbReference type="Araport" id="AT3G16550"/>
<dbReference type="TAIR" id="AT3G16550">
    <property type="gene designation" value="DEG12"/>
</dbReference>
<dbReference type="eggNOG" id="KOG1320">
    <property type="taxonomic scope" value="Eukaryota"/>
</dbReference>
<dbReference type="HOGENOM" id="CLU_020120_10_2_1"/>
<dbReference type="InParanoid" id="Q9LK70"/>
<dbReference type="OMA" id="THTERCY"/>
<dbReference type="PhylomeDB" id="Q9LK70"/>
<dbReference type="PRO" id="PR:Q9LK70"/>
<dbReference type="Proteomes" id="UP000006548">
    <property type="component" value="Chromosome 3"/>
</dbReference>
<dbReference type="ExpressionAtlas" id="Q9LK70">
    <property type="expression patterns" value="differential"/>
</dbReference>
<dbReference type="GO" id="GO:0005759">
    <property type="term" value="C:mitochondrial matrix"/>
    <property type="evidence" value="ECO:0007669"/>
    <property type="project" value="UniProtKB-SubCell"/>
</dbReference>
<dbReference type="GO" id="GO:0004252">
    <property type="term" value="F:serine-type endopeptidase activity"/>
    <property type="evidence" value="ECO:0007669"/>
    <property type="project" value="InterPro"/>
</dbReference>
<dbReference type="GO" id="GO:0006508">
    <property type="term" value="P:proteolysis"/>
    <property type="evidence" value="ECO:0007669"/>
    <property type="project" value="UniProtKB-KW"/>
</dbReference>
<dbReference type="Gene3D" id="2.30.42.10">
    <property type="match status" value="1"/>
</dbReference>
<dbReference type="Gene3D" id="3.20.190.20">
    <property type="match status" value="1"/>
</dbReference>
<dbReference type="Gene3D" id="2.40.10.10">
    <property type="entry name" value="Trypsin-like serine proteases"/>
    <property type="match status" value="2"/>
</dbReference>
<dbReference type="InterPro" id="IPR041517">
    <property type="entry name" value="DEGP_PDZ"/>
</dbReference>
<dbReference type="InterPro" id="IPR046449">
    <property type="entry name" value="DEGP_PDZ_sf"/>
</dbReference>
<dbReference type="InterPro" id="IPR001478">
    <property type="entry name" value="PDZ"/>
</dbReference>
<dbReference type="InterPro" id="IPR036034">
    <property type="entry name" value="PDZ_sf"/>
</dbReference>
<dbReference type="InterPro" id="IPR009003">
    <property type="entry name" value="Peptidase_S1_PA"/>
</dbReference>
<dbReference type="InterPro" id="IPR043504">
    <property type="entry name" value="Peptidase_S1_PA_chymotrypsin"/>
</dbReference>
<dbReference type="InterPro" id="IPR001940">
    <property type="entry name" value="Peptidase_S1C"/>
</dbReference>
<dbReference type="PANTHER" id="PTHR45980">
    <property type="match status" value="1"/>
</dbReference>
<dbReference type="PANTHER" id="PTHR45980:SF7">
    <property type="entry name" value="PROTEASE DO-LIKE 11, MITOCHONDRIAL-RELATED"/>
    <property type="match status" value="1"/>
</dbReference>
<dbReference type="Pfam" id="PF13180">
    <property type="entry name" value="PDZ_2"/>
    <property type="match status" value="1"/>
</dbReference>
<dbReference type="Pfam" id="PF17815">
    <property type="entry name" value="PDZ_3"/>
    <property type="match status" value="2"/>
</dbReference>
<dbReference type="Pfam" id="PF13365">
    <property type="entry name" value="Trypsin_2"/>
    <property type="match status" value="1"/>
</dbReference>
<dbReference type="PRINTS" id="PR00834">
    <property type="entry name" value="PROTEASES2C"/>
</dbReference>
<dbReference type="SUPFAM" id="SSF50156">
    <property type="entry name" value="PDZ domain-like"/>
    <property type="match status" value="1"/>
</dbReference>
<dbReference type="SUPFAM" id="SSF50494">
    <property type="entry name" value="Trypsin-like serine proteases"/>
    <property type="match status" value="1"/>
</dbReference>
<name>DGP12_ARATH</name>
<evidence type="ECO:0000255" key="1"/>
<evidence type="ECO:0000305" key="2"/>
<gene>
    <name type="primary">DEGP12</name>
    <name type="ordered locus">At3g16550</name>
    <name type="ORF">MDC8.18</name>
</gene>
<organism>
    <name type="scientific">Arabidopsis thaliana</name>
    <name type="common">Mouse-ear cress</name>
    <dbReference type="NCBI Taxonomy" id="3702"/>
    <lineage>
        <taxon>Eukaryota</taxon>
        <taxon>Viridiplantae</taxon>
        <taxon>Streptophyta</taxon>
        <taxon>Embryophyta</taxon>
        <taxon>Tracheophyta</taxon>
        <taxon>Spermatophyta</taxon>
        <taxon>Magnoliopsida</taxon>
        <taxon>eudicotyledons</taxon>
        <taxon>Gunneridae</taxon>
        <taxon>Pentapetalae</taxon>
        <taxon>rosids</taxon>
        <taxon>malvids</taxon>
        <taxon>Brassicales</taxon>
        <taxon>Brassicaceae</taxon>
        <taxon>Camelineae</taxon>
        <taxon>Arabidopsis</taxon>
    </lineage>
</organism>
<feature type="transit peptide" description="Mitochondrion" evidence="1">
    <location>
        <begin position="1"/>
        <end position="24"/>
    </location>
</feature>
<feature type="chain" id="PRO_0000045836" description="Putative protease Do-like 12, mitochondrial">
    <location>
        <begin position="25"/>
        <end position="499"/>
    </location>
</feature>
<feature type="domain" description="PDZ">
    <location>
        <begin position="272"/>
        <end position="356"/>
    </location>
</feature>
<feature type="region of interest" description="Serine protease">
    <location>
        <begin position="94"/>
        <end position="259"/>
    </location>
</feature>
<feature type="active site" description="Charge relay system" evidence="1">
    <location>
        <position position="110"/>
    </location>
</feature>
<feature type="active site" description="Charge relay system" evidence="1">
    <location>
        <position position="144"/>
    </location>
</feature>
<feature type="active site" description="Charge relay system" evidence="1">
    <location>
        <position position="222"/>
    </location>
</feature>